<evidence type="ECO:0000256" key="1">
    <source>
        <dbReference type="SAM" id="MobiDB-lite"/>
    </source>
</evidence>
<evidence type="ECO:0000305" key="2"/>
<reference key="1">
    <citation type="journal article" date="1995" name="Proc. R. Soc. B">
        <title>Molecular phylogeny and evolution of marsupial protamine P1 genes.</title>
        <authorList>
            <person name="Retief J.D."/>
            <person name="Krajewski C."/>
            <person name="Westerman M."/>
            <person name="Winkfein R.J."/>
            <person name="Dixon G.H."/>
        </authorList>
    </citation>
    <scope>NUCLEOTIDE SEQUENCE [GENOMIC DNA]</scope>
    <source>
        <tissue>Sperm</tissue>
    </source>
</reference>
<organism>
    <name type="scientific">Perameles gunnii</name>
    <name type="common">Eastern barred bandicoot</name>
    <dbReference type="NCBI Taxonomy" id="37737"/>
    <lineage>
        <taxon>Eukaryota</taxon>
        <taxon>Metazoa</taxon>
        <taxon>Chordata</taxon>
        <taxon>Craniata</taxon>
        <taxon>Vertebrata</taxon>
        <taxon>Euteleostomi</taxon>
        <taxon>Mammalia</taxon>
        <taxon>Metatheria</taxon>
        <taxon>Peramelemorphia</taxon>
        <taxon>Peramelidae</taxon>
        <taxon>Perameles</taxon>
    </lineage>
</organism>
<feature type="chain" id="PRO_0000191525" description="Sperm protamine P1">
    <location>
        <begin position="1"/>
        <end position="69"/>
    </location>
</feature>
<feature type="region of interest" description="Disordered" evidence="1">
    <location>
        <begin position="1"/>
        <end position="69"/>
    </location>
</feature>
<feature type="compositionally biased region" description="Basic residues" evidence="1">
    <location>
        <begin position="7"/>
        <end position="25"/>
    </location>
</feature>
<feature type="compositionally biased region" description="Basic residues" evidence="1">
    <location>
        <begin position="34"/>
        <end position="63"/>
    </location>
</feature>
<comment type="function">
    <text>Protamines substitute for histones in the chromatin of sperm during the haploid phase of spermatogenesis. They compact sperm DNA into a highly condensed, stable and inactive complex.</text>
</comment>
<comment type="subcellular location">
    <subcellularLocation>
        <location>Nucleus</location>
    </subcellularLocation>
    <subcellularLocation>
        <location>Chromosome</location>
    </subcellularLocation>
</comment>
<comment type="tissue specificity">
    <text>Testis.</text>
</comment>
<comment type="similarity">
    <text evidence="2">Belongs to the protamine P1 family.</text>
</comment>
<keyword id="KW-0158">Chromosome</keyword>
<keyword id="KW-0217">Developmental protein</keyword>
<keyword id="KW-0221">Differentiation</keyword>
<keyword id="KW-0226">DNA condensation</keyword>
<keyword id="KW-0238">DNA-binding</keyword>
<keyword id="KW-0544">Nucleosome core</keyword>
<keyword id="KW-0539">Nucleus</keyword>
<keyword id="KW-0744">Spermatogenesis</keyword>
<protein>
    <recommendedName>
        <fullName>Sperm protamine P1</fullName>
    </recommendedName>
</protein>
<dbReference type="EMBL" id="L35305">
    <property type="protein sequence ID" value="AAA74617.1"/>
    <property type="molecule type" value="Genomic_DNA"/>
</dbReference>
<dbReference type="SMR" id="P42147"/>
<dbReference type="GO" id="GO:0000786">
    <property type="term" value="C:nucleosome"/>
    <property type="evidence" value="ECO:0007669"/>
    <property type="project" value="UniProtKB-KW"/>
</dbReference>
<dbReference type="GO" id="GO:0005634">
    <property type="term" value="C:nucleus"/>
    <property type="evidence" value="ECO:0007669"/>
    <property type="project" value="UniProtKB-SubCell"/>
</dbReference>
<dbReference type="GO" id="GO:0003677">
    <property type="term" value="F:DNA binding"/>
    <property type="evidence" value="ECO:0007669"/>
    <property type="project" value="UniProtKB-KW"/>
</dbReference>
<dbReference type="GO" id="GO:0030154">
    <property type="term" value="P:cell differentiation"/>
    <property type="evidence" value="ECO:0007669"/>
    <property type="project" value="UniProtKB-KW"/>
</dbReference>
<dbReference type="GO" id="GO:0030261">
    <property type="term" value="P:chromosome condensation"/>
    <property type="evidence" value="ECO:0007669"/>
    <property type="project" value="UniProtKB-KW"/>
</dbReference>
<dbReference type="GO" id="GO:0007283">
    <property type="term" value="P:spermatogenesis"/>
    <property type="evidence" value="ECO:0007669"/>
    <property type="project" value="UniProtKB-KW"/>
</dbReference>
<name>HSP1_PERGU</name>
<accession>P42147</accession>
<sequence length="69" mass="8381">MASYRNSRSRSRSRFRRRRRGRSRVRGRDARQGRSSRRRRRGKGRAHSGKKGRRSGSRRRKRNNNTENK</sequence>
<gene>
    <name type="primary">PRM1</name>
</gene>
<proteinExistence type="evidence at transcript level"/>